<keyword id="KW-0963">Cytoplasm</keyword>
<keyword id="KW-0690">Ribosome biogenesis</keyword>
<sequence>MSLFELLEPTIAGMGYELVDIEQSAPGRLLRVFVDKKDGAITLADCVAVSNHLGQLLAVENIDYNRLEVSSPGLDRPLKKRADFVRFVGESIRIRLRIALQGQRNFVGTLTEVGDDALMLNVDGKLLQFELKNLEKARLIPKL</sequence>
<organism>
    <name type="scientific">Nitrosomonas eutropha (strain DSM 101675 / C91 / Nm57)</name>
    <dbReference type="NCBI Taxonomy" id="335283"/>
    <lineage>
        <taxon>Bacteria</taxon>
        <taxon>Pseudomonadati</taxon>
        <taxon>Pseudomonadota</taxon>
        <taxon>Betaproteobacteria</taxon>
        <taxon>Nitrosomonadales</taxon>
        <taxon>Nitrosomonadaceae</taxon>
        <taxon>Nitrosomonas</taxon>
    </lineage>
</organism>
<reference key="1">
    <citation type="journal article" date="2007" name="Environ. Microbiol.">
        <title>Whole-genome analysis of the ammonia-oxidizing bacterium, Nitrosomonas eutropha C91: implications for niche adaptation.</title>
        <authorList>
            <person name="Stein L.Y."/>
            <person name="Arp D.J."/>
            <person name="Berube P.M."/>
            <person name="Chain P.S."/>
            <person name="Hauser L."/>
            <person name="Jetten M.S."/>
            <person name="Klotz M.G."/>
            <person name="Larimer F.W."/>
            <person name="Norton J.M."/>
            <person name="Op den Camp H.J.M."/>
            <person name="Shin M."/>
            <person name="Wei X."/>
        </authorList>
    </citation>
    <scope>NUCLEOTIDE SEQUENCE [LARGE SCALE GENOMIC DNA]</scope>
    <source>
        <strain>DSM 101675 / C91 / Nm57</strain>
    </source>
</reference>
<name>RIMP_NITEC</name>
<accession>Q0AFJ1</accession>
<proteinExistence type="inferred from homology"/>
<protein>
    <recommendedName>
        <fullName evidence="1">Ribosome maturation factor RimP</fullName>
    </recommendedName>
</protein>
<gene>
    <name evidence="1" type="primary">rimP</name>
    <name type="ordered locus">Neut_1648</name>
</gene>
<dbReference type="EMBL" id="CP000450">
    <property type="protein sequence ID" value="ABI59891.1"/>
    <property type="status" value="ALT_INIT"/>
    <property type="molecule type" value="Genomic_DNA"/>
</dbReference>
<dbReference type="RefSeq" id="WP_041353794.1">
    <property type="nucleotide sequence ID" value="NC_008344.1"/>
</dbReference>
<dbReference type="SMR" id="Q0AFJ1"/>
<dbReference type="STRING" id="335283.Neut_1648"/>
<dbReference type="KEGG" id="net:Neut_1648"/>
<dbReference type="eggNOG" id="COG0779">
    <property type="taxonomic scope" value="Bacteria"/>
</dbReference>
<dbReference type="HOGENOM" id="CLU_070525_1_0_4"/>
<dbReference type="OrthoDB" id="9805006at2"/>
<dbReference type="Proteomes" id="UP000001966">
    <property type="component" value="Chromosome"/>
</dbReference>
<dbReference type="GO" id="GO:0005829">
    <property type="term" value="C:cytosol"/>
    <property type="evidence" value="ECO:0007669"/>
    <property type="project" value="TreeGrafter"/>
</dbReference>
<dbReference type="GO" id="GO:0000028">
    <property type="term" value="P:ribosomal small subunit assembly"/>
    <property type="evidence" value="ECO:0007669"/>
    <property type="project" value="TreeGrafter"/>
</dbReference>
<dbReference type="GO" id="GO:0006412">
    <property type="term" value="P:translation"/>
    <property type="evidence" value="ECO:0007669"/>
    <property type="project" value="TreeGrafter"/>
</dbReference>
<dbReference type="CDD" id="cd01734">
    <property type="entry name" value="YlxS_C"/>
    <property type="match status" value="1"/>
</dbReference>
<dbReference type="Gene3D" id="2.30.30.180">
    <property type="entry name" value="Ribosome maturation factor RimP, C-terminal domain"/>
    <property type="match status" value="1"/>
</dbReference>
<dbReference type="Gene3D" id="3.30.300.70">
    <property type="entry name" value="RimP-like superfamily, N-terminal"/>
    <property type="match status" value="1"/>
</dbReference>
<dbReference type="HAMAP" id="MF_01077">
    <property type="entry name" value="RimP"/>
    <property type="match status" value="1"/>
</dbReference>
<dbReference type="InterPro" id="IPR003728">
    <property type="entry name" value="Ribosome_maturation_RimP"/>
</dbReference>
<dbReference type="InterPro" id="IPR028998">
    <property type="entry name" value="RimP_C"/>
</dbReference>
<dbReference type="InterPro" id="IPR036847">
    <property type="entry name" value="RimP_C_sf"/>
</dbReference>
<dbReference type="InterPro" id="IPR028989">
    <property type="entry name" value="RimP_N"/>
</dbReference>
<dbReference type="InterPro" id="IPR035956">
    <property type="entry name" value="RimP_N_sf"/>
</dbReference>
<dbReference type="NCBIfam" id="NF000929">
    <property type="entry name" value="PRK00092.2-1"/>
    <property type="match status" value="1"/>
</dbReference>
<dbReference type="PANTHER" id="PTHR33867">
    <property type="entry name" value="RIBOSOME MATURATION FACTOR RIMP"/>
    <property type="match status" value="1"/>
</dbReference>
<dbReference type="PANTHER" id="PTHR33867:SF1">
    <property type="entry name" value="RIBOSOME MATURATION FACTOR RIMP"/>
    <property type="match status" value="1"/>
</dbReference>
<dbReference type="Pfam" id="PF17384">
    <property type="entry name" value="DUF150_C"/>
    <property type="match status" value="1"/>
</dbReference>
<dbReference type="Pfam" id="PF02576">
    <property type="entry name" value="RimP_N"/>
    <property type="match status" value="1"/>
</dbReference>
<dbReference type="SUPFAM" id="SSF74942">
    <property type="entry name" value="YhbC-like, C-terminal domain"/>
    <property type="match status" value="1"/>
</dbReference>
<dbReference type="SUPFAM" id="SSF75420">
    <property type="entry name" value="YhbC-like, N-terminal domain"/>
    <property type="match status" value="1"/>
</dbReference>
<feature type="chain" id="PRO_0000384721" description="Ribosome maturation factor RimP">
    <location>
        <begin position="1"/>
        <end position="143"/>
    </location>
</feature>
<comment type="function">
    <text evidence="1">Required for maturation of 30S ribosomal subunits.</text>
</comment>
<comment type="subcellular location">
    <subcellularLocation>
        <location evidence="1">Cytoplasm</location>
    </subcellularLocation>
</comment>
<comment type="similarity">
    <text evidence="1">Belongs to the RimP family.</text>
</comment>
<comment type="sequence caution" evidence="2">
    <conflict type="erroneous initiation">
        <sequence resource="EMBL-CDS" id="ABI59891"/>
    </conflict>
</comment>
<evidence type="ECO:0000255" key="1">
    <source>
        <dbReference type="HAMAP-Rule" id="MF_01077"/>
    </source>
</evidence>
<evidence type="ECO:0000305" key="2"/>